<protein>
    <recommendedName>
        <fullName evidence="2">Large ribosomal subunit protein bL20</fullName>
    </recommendedName>
    <alternativeName>
        <fullName>50S ribosomal protein L20</fullName>
    </alternativeName>
</protein>
<organism>
    <name type="scientific">Haemophilus influenzae (strain ATCC 51907 / DSM 11121 / KW20 / Rd)</name>
    <dbReference type="NCBI Taxonomy" id="71421"/>
    <lineage>
        <taxon>Bacteria</taxon>
        <taxon>Pseudomonadati</taxon>
        <taxon>Pseudomonadota</taxon>
        <taxon>Gammaproteobacteria</taxon>
        <taxon>Pasteurellales</taxon>
        <taxon>Pasteurellaceae</taxon>
        <taxon>Haemophilus</taxon>
    </lineage>
</organism>
<name>RL20_HAEIN</name>
<feature type="initiator methionine" description="Removed" evidence="1">
    <location>
        <position position="1"/>
    </location>
</feature>
<feature type="chain" id="PRO_0000177165" description="Large ribosomal subunit protein bL20">
    <location>
        <begin position="2"/>
        <end position="117"/>
    </location>
</feature>
<keyword id="KW-1185">Reference proteome</keyword>
<keyword id="KW-0687">Ribonucleoprotein</keyword>
<keyword id="KW-0689">Ribosomal protein</keyword>
<keyword id="KW-0694">RNA-binding</keyword>
<keyword id="KW-0699">rRNA-binding</keyword>
<evidence type="ECO:0000250" key="1"/>
<evidence type="ECO:0000305" key="2"/>
<accession>P44358</accession>
<dbReference type="EMBL" id="L42023">
    <property type="protein sequence ID" value="AAC22965.1"/>
    <property type="molecule type" value="Genomic_DNA"/>
</dbReference>
<dbReference type="PIR" id="C64116">
    <property type="entry name" value="C64116"/>
</dbReference>
<dbReference type="RefSeq" id="NP_439471.1">
    <property type="nucleotide sequence ID" value="NC_000907.1"/>
</dbReference>
<dbReference type="SMR" id="P44358"/>
<dbReference type="STRING" id="71421.HI_1320"/>
<dbReference type="EnsemblBacteria" id="AAC22965">
    <property type="protein sequence ID" value="AAC22965"/>
    <property type="gene ID" value="HI_1320"/>
</dbReference>
<dbReference type="KEGG" id="hin:HI_1320"/>
<dbReference type="PATRIC" id="fig|71421.8.peg.1372"/>
<dbReference type="eggNOG" id="COG0292">
    <property type="taxonomic scope" value="Bacteria"/>
</dbReference>
<dbReference type="HOGENOM" id="CLU_123265_0_1_6"/>
<dbReference type="OrthoDB" id="9808966at2"/>
<dbReference type="PhylomeDB" id="P44358"/>
<dbReference type="BioCyc" id="HINF71421:G1GJ1-1345-MONOMER"/>
<dbReference type="PRO" id="PR:P44358"/>
<dbReference type="Proteomes" id="UP000000579">
    <property type="component" value="Chromosome"/>
</dbReference>
<dbReference type="GO" id="GO:0022625">
    <property type="term" value="C:cytosolic large ribosomal subunit"/>
    <property type="evidence" value="ECO:0000318"/>
    <property type="project" value="GO_Central"/>
</dbReference>
<dbReference type="GO" id="GO:0019843">
    <property type="term" value="F:rRNA binding"/>
    <property type="evidence" value="ECO:0007669"/>
    <property type="project" value="UniProtKB-UniRule"/>
</dbReference>
<dbReference type="GO" id="GO:0003735">
    <property type="term" value="F:structural constituent of ribosome"/>
    <property type="evidence" value="ECO:0000318"/>
    <property type="project" value="GO_Central"/>
</dbReference>
<dbReference type="GO" id="GO:0000027">
    <property type="term" value="P:ribosomal large subunit assembly"/>
    <property type="evidence" value="ECO:0007669"/>
    <property type="project" value="UniProtKB-UniRule"/>
</dbReference>
<dbReference type="GO" id="GO:0006412">
    <property type="term" value="P:translation"/>
    <property type="evidence" value="ECO:0007669"/>
    <property type="project" value="InterPro"/>
</dbReference>
<dbReference type="CDD" id="cd07026">
    <property type="entry name" value="Ribosomal_L20"/>
    <property type="match status" value="1"/>
</dbReference>
<dbReference type="FunFam" id="1.10.1900.20:FF:000001">
    <property type="entry name" value="50S ribosomal protein L20"/>
    <property type="match status" value="1"/>
</dbReference>
<dbReference type="Gene3D" id="6.10.160.10">
    <property type="match status" value="1"/>
</dbReference>
<dbReference type="Gene3D" id="1.10.1900.20">
    <property type="entry name" value="Ribosomal protein L20"/>
    <property type="match status" value="1"/>
</dbReference>
<dbReference type="HAMAP" id="MF_00382">
    <property type="entry name" value="Ribosomal_bL20"/>
    <property type="match status" value="1"/>
</dbReference>
<dbReference type="InterPro" id="IPR005813">
    <property type="entry name" value="Ribosomal_bL20"/>
</dbReference>
<dbReference type="InterPro" id="IPR049946">
    <property type="entry name" value="RIBOSOMAL_L20_CS"/>
</dbReference>
<dbReference type="InterPro" id="IPR035566">
    <property type="entry name" value="Ribosomal_protein_bL20_C"/>
</dbReference>
<dbReference type="NCBIfam" id="TIGR01032">
    <property type="entry name" value="rplT_bact"/>
    <property type="match status" value="1"/>
</dbReference>
<dbReference type="PANTHER" id="PTHR10986">
    <property type="entry name" value="39S RIBOSOMAL PROTEIN L20"/>
    <property type="match status" value="1"/>
</dbReference>
<dbReference type="Pfam" id="PF00453">
    <property type="entry name" value="Ribosomal_L20"/>
    <property type="match status" value="1"/>
</dbReference>
<dbReference type="PRINTS" id="PR00062">
    <property type="entry name" value="RIBOSOMALL20"/>
</dbReference>
<dbReference type="SUPFAM" id="SSF74731">
    <property type="entry name" value="Ribosomal protein L20"/>
    <property type="match status" value="1"/>
</dbReference>
<dbReference type="PROSITE" id="PS00937">
    <property type="entry name" value="RIBOSOMAL_L20"/>
    <property type="match status" value="1"/>
</dbReference>
<proteinExistence type="inferred from homology"/>
<comment type="function">
    <text evidence="1">Binds directly to 23S ribosomal RNA and is necessary for the in vitro assembly process of the 50S ribosomal subunit. It is not involved in the protein synthesizing functions of that subunit (By similarity).</text>
</comment>
<comment type="similarity">
    <text evidence="2">Belongs to the bacterial ribosomal protein bL20 family.</text>
</comment>
<gene>
    <name type="primary">rplT</name>
    <name type="synonym">rpl20</name>
    <name type="ordered locus">HI_1320</name>
</gene>
<reference key="1">
    <citation type="journal article" date="1995" name="Science">
        <title>Whole-genome random sequencing and assembly of Haemophilus influenzae Rd.</title>
        <authorList>
            <person name="Fleischmann R.D."/>
            <person name="Adams M.D."/>
            <person name="White O."/>
            <person name="Clayton R.A."/>
            <person name="Kirkness E.F."/>
            <person name="Kerlavage A.R."/>
            <person name="Bult C.J."/>
            <person name="Tomb J.-F."/>
            <person name="Dougherty B.A."/>
            <person name="Merrick J.M."/>
            <person name="McKenney K."/>
            <person name="Sutton G.G."/>
            <person name="FitzHugh W."/>
            <person name="Fields C.A."/>
            <person name="Gocayne J.D."/>
            <person name="Scott J.D."/>
            <person name="Shirley R."/>
            <person name="Liu L.-I."/>
            <person name="Glodek A."/>
            <person name="Kelley J.M."/>
            <person name="Weidman J.F."/>
            <person name="Phillips C.A."/>
            <person name="Spriggs T."/>
            <person name="Hedblom E."/>
            <person name="Cotton M.D."/>
            <person name="Utterback T.R."/>
            <person name="Hanna M.C."/>
            <person name="Nguyen D.T."/>
            <person name="Saudek D.M."/>
            <person name="Brandon R.C."/>
            <person name="Fine L.D."/>
            <person name="Fritchman J.L."/>
            <person name="Fuhrmann J.L."/>
            <person name="Geoghagen N.S.M."/>
            <person name="Gnehm C.L."/>
            <person name="McDonald L.A."/>
            <person name="Small K.V."/>
            <person name="Fraser C.M."/>
            <person name="Smith H.O."/>
            <person name="Venter J.C."/>
        </authorList>
    </citation>
    <scope>NUCLEOTIDE SEQUENCE [LARGE SCALE GENOMIC DNA]</scope>
    <source>
        <strain>ATCC 51907 / DSM 11121 / KW20 / Rd</strain>
    </source>
</reference>
<sequence>MARVKRGVIARARHKKVLKAAKGYYGARSRVYRVAFQAVIKAGQYAYRDRRQRKRQFRQLWIARINAAARQNGLSYSKFINGLKKASVEIDRKILADIAVFDKVAFAALVEKAKSAL</sequence>